<reference key="1">
    <citation type="submission" date="1998-05" db="EMBL/GenBank/DDBJ databases">
        <title>Structure and expression of the rat 5T4 gene.</title>
        <authorList>
            <person name="Ninkina N.N."/>
            <person name="Buchman V.L."/>
        </authorList>
    </citation>
    <scope>NUCLEOTIDE SEQUENCE [MRNA]</scope>
    <source>
        <tissue>Cerebellum</tissue>
    </source>
</reference>
<reference key="2">
    <citation type="journal article" date="2004" name="Genome Res.">
        <title>The status, quality, and expansion of the NIH full-length cDNA project: the Mammalian Gene Collection (MGC).</title>
        <authorList>
            <consortium name="The MGC Project Team"/>
        </authorList>
    </citation>
    <scope>NUCLEOTIDE SEQUENCE [LARGE SCALE MRNA]</scope>
    <source>
        <tissue>Heart</tissue>
    </source>
</reference>
<reference key="3">
    <citation type="journal article" date="2012" name="Nat. Commun.">
        <title>Quantitative maps of protein phosphorylation sites across 14 different rat organs and tissues.</title>
        <authorList>
            <person name="Lundby A."/>
            <person name="Secher A."/>
            <person name="Lage K."/>
            <person name="Nordsborg N.B."/>
            <person name="Dmytriyev A."/>
            <person name="Lundby C."/>
            <person name="Olsen J.V."/>
        </authorList>
    </citation>
    <scope>PHOSPHORYLATION [LARGE SCALE ANALYSIS] AT SER-424</scope>
    <scope>IDENTIFICATION BY MASS SPECTROMETRY [LARGE SCALE ANALYSIS]</scope>
</reference>
<reference key="4">
    <citation type="journal article" date="2013" name="J. Proteome Res.">
        <title>Site-specific glycan-peptide analysis for determination of N-glycoproteome heterogeneity.</title>
        <authorList>
            <person name="Parker B.L."/>
            <person name="Thaysen-Andersen M."/>
            <person name="Solis N."/>
            <person name="Scott N.E."/>
            <person name="Larsen M.R."/>
            <person name="Graham M.E."/>
            <person name="Packer N.H."/>
            <person name="Cordwell S.J."/>
        </authorList>
    </citation>
    <scope>GLYCOSYLATION [LARGE SCALE ANALYSIS] AT ASN-124</scope>
    <scope>IDENTIFICATION BY MASS SPECTROMETRY [LARGE SCALE ANALYSIS]</scope>
    <source>
        <tissue>Brain</tissue>
    </source>
</reference>
<accession>Q5PQV5</accession>
<accession>Q9QYD9</accession>
<organism>
    <name type="scientific">Rattus norvegicus</name>
    <name type="common">Rat</name>
    <dbReference type="NCBI Taxonomy" id="10116"/>
    <lineage>
        <taxon>Eukaryota</taxon>
        <taxon>Metazoa</taxon>
        <taxon>Chordata</taxon>
        <taxon>Craniata</taxon>
        <taxon>Vertebrata</taxon>
        <taxon>Euteleostomi</taxon>
        <taxon>Mammalia</taxon>
        <taxon>Eutheria</taxon>
        <taxon>Euarchontoglires</taxon>
        <taxon>Glires</taxon>
        <taxon>Rodentia</taxon>
        <taxon>Myomorpha</taxon>
        <taxon>Muroidea</taxon>
        <taxon>Muridae</taxon>
        <taxon>Murinae</taxon>
        <taxon>Rattus</taxon>
    </lineage>
</organism>
<feature type="signal peptide" evidence="2">
    <location>
        <begin position="1"/>
        <end position="31"/>
    </location>
</feature>
<feature type="chain" id="PRO_0000019594" description="Trophoblast glycoprotein">
    <location>
        <begin position="32"/>
        <end position="426"/>
    </location>
</feature>
<feature type="topological domain" description="Extracellular" evidence="2">
    <location>
        <begin position="32"/>
        <end position="361"/>
    </location>
</feature>
<feature type="transmembrane region" description="Helical" evidence="2">
    <location>
        <begin position="362"/>
        <end position="382"/>
    </location>
</feature>
<feature type="topological domain" description="Cytoplasmic" evidence="2">
    <location>
        <begin position="383"/>
        <end position="426"/>
    </location>
</feature>
<feature type="domain" description="LRRNT">
    <location>
        <begin position="53"/>
        <end position="91"/>
    </location>
</feature>
<feature type="repeat" description="LRR 1">
    <location>
        <begin position="92"/>
        <end position="113"/>
    </location>
</feature>
<feature type="repeat" description="LRR 2">
    <location>
        <begin position="116"/>
        <end position="139"/>
    </location>
</feature>
<feature type="repeat" description="LRR 3">
    <location>
        <begin position="141"/>
        <end position="163"/>
    </location>
</feature>
<feature type="repeat" description="LRR 4">
    <location>
        <begin position="172"/>
        <end position="210"/>
    </location>
</feature>
<feature type="repeat" description="LRR 5">
    <location>
        <begin position="215"/>
        <end position="238"/>
    </location>
</feature>
<feature type="repeat" description="LRR 6">
    <location>
        <begin position="239"/>
        <end position="261"/>
    </location>
</feature>
<feature type="repeat" description="LRR 7">
    <location>
        <begin position="262"/>
        <end position="281"/>
    </location>
</feature>
<feature type="domain" description="LRRCT">
    <location>
        <begin position="289"/>
        <end position="352"/>
    </location>
</feature>
<feature type="region of interest" description="Disordered" evidence="3">
    <location>
        <begin position="34"/>
        <end position="54"/>
    </location>
</feature>
<feature type="compositionally biased region" description="Low complexity" evidence="3">
    <location>
        <begin position="34"/>
        <end position="51"/>
    </location>
</feature>
<feature type="modified residue" description="Phosphoserine" evidence="5">
    <location>
        <position position="424"/>
    </location>
</feature>
<feature type="glycosylation site" description="N-linked (GlcNAc...) asparagine" evidence="6">
    <location>
        <position position="124"/>
    </location>
</feature>
<feature type="glycosylation site" description="N-linked (GlcNAc...) asparagine" evidence="2">
    <location>
        <position position="166"/>
    </location>
</feature>
<feature type="glycosylation site" description="N-linked (GlcNAc...) asparagine" evidence="2">
    <location>
        <position position="281"/>
    </location>
</feature>
<feature type="disulfide bond" evidence="1">
    <location>
        <begin position="62"/>
        <end position="68"/>
    </location>
</feature>
<feature type="disulfide bond" evidence="1">
    <location>
        <begin position="66"/>
        <end position="77"/>
    </location>
</feature>
<feature type="disulfide bond" evidence="1">
    <location>
        <begin position="304"/>
        <end position="329"/>
    </location>
</feature>
<feature type="disulfide bond" evidence="1">
    <location>
        <begin position="306"/>
        <end position="350"/>
    </location>
</feature>
<feature type="sequence conflict" description="In Ref. 1; AAF21770." evidence="4" ref="1">
    <original>R</original>
    <variation>S</variation>
    <location>
        <position position="416"/>
    </location>
</feature>
<evidence type="ECO:0000250" key="1"/>
<evidence type="ECO:0000255" key="2"/>
<evidence type="ECO:0000256" key="3">
    <source>
        <dbReference type="SAM" id="MobiDB-lite"/>
    </source>
</evidence>
<evidence type="ECO:0000305" key="4"/>
<evidence type="ECO:0007744" key="5">
    <source>
    </source>
</evidence>
<evidence type="ECO:0007744" key="6">
    <source>
    </source>
</evidence>
<comment type="function">
    <text evidence="1">May function as an inhibitor of Wnt/beta-catenin signaling by indirectly interacting with LRP6 and blocking Wnt3a-dependent LRP6 internalization.</text>
</comment>
<comment type="subcellular location">
    <subcellularLocation>
        <location evidence="1">Cell membrane</location>
        <topology evidence="1">Single-pass type I membrane protein</topology>
    </subcellularLocation>
</comment>
<comment type="domain">
    <text evidence="1">The C-terminus of LRR N-terminal cap (LRRNT) and LRR 1 are essential for the inhibition of the Wnt signaling pathway.</text>
</comment>
<comment type="PTM">
    <text evidence="1">Highly glycosylated.</text>
</comment>
<protein>
    <recommendedName>
        <fullName>Trophoblast glycoprotein</fullName>
    </recommendedName>
    <alternativeName>
        <fullName>5T4 oncofetal trophoblast glycoprotein</fullName>
        <shortName>5T4 oncotrophoblast glycoprotein</shortName>
    </alternativeName>
    <alternativeName>
        <fullName>Wnt-activated inhibitory factor 1</fullName>
        <shortName>WAIF1</shortName>
    </alternativeName>
</protein>
<gene>
    <name type="primary">Tpbg</name>
    <name type="synonym">5t4</name>
</gene>
<dbReference type="EMBL" id="AF063939">
    <property type="protein sequence ID" value="AAF21770.1"/>
    <property type="molecule type" value="mRNA"/>
</dbReference>
<dbReference type="EMBL" id="BC087011">
    <property type="protein sequence ID" value="AAH87011.1"/>
    <property type="molecule type" value="mRNA"/>
</dbReference>
<dbReference type="RefSeq" id="NP_001418560.1">
    <property type="nucleotide sequence ID" value="NM_001431631.1"/>
</dbReference>
<dbReference type="RefSeq" id="NP_113995.2">
    <property type="nucleotide sequence ID" value="NM_031807.3"/>
</dbReference>
<dbReference type="RefSeq" id="XP_006243561.1">
    <property type="nucleotide sequence ID" value="XM_006243499.3"/>
</dbReference>
<dbReference type="RefSeq" id="XP_008764679.1">
    <property type="nucleotide sequence ID" value="XM_008766457.4"/>
</dbReference>
<dbReference type="RefSeq" id="XP_017451424.1">
    <property type="nucleotide sequence ID" value="XM_017595935.3"/>
</dbReference>
<dbReference type="SMR" id="Q5PQV5"/>
<dbReference type="FunCoup" id="Q5PQV5">
    <property type="interactions" value="948"/>
</dbReference>
<dbReference type="STRING" id="10116.ENSRNOP00000014326"/>
<dbReference type="GlyCosmos" id="Q5PQV5">
    <property type="glycosylation" value="3 sites, 2 glycans"/>
</dbReference>
<dbReference type="GlyGen" id="Q5PQV5">
    <property type="glycosylation" value="3 sites, 2 N-linked glycans (1 site)"/>
</dbReference>
<dbReference type="iPTMnet" id="Q5PQV5"/>
<dbReference type="PhosphoSitePlus" id="Q5PQV5"/>
<dbReference type="PaxDb" id="10116-ENSRNOP00000014326"/>
<dbReference type="Ensembl" id="ENSRNOT00000014326.3">
    <property type="protein sequence ID" value="ENSRNOP00000014326.1"/>
    <property type="gene ID" value="ENSRNOG00000010694.6"/>
</dbReference>
<dbReference type="Ensembl" id="ENSRNOT00000089491.2">
    <property type="protein sequence ID" value="ENSRNOP00000075124.1"/>
    <property type="gene ID" value="ENSRNOG00000010694.6"/>
</dbReference>
<dbReference type="Ensembl" id="ENSRNOT00000104677.1">
    <property type="protein sequence ID" value="ENSRNOP00000085521.1"/>
    <property type="gene ID" value="ENSRNOG00000010694.6"/>
</dbReference>
<dbReference type="GeneID" id="83684"/>
<dbReference type="KEGG" id="rno:83684"/>
<dbReference type="UCSC" id="RGD:621453">
    <property type="organism name" value="rat"/>
</dbReference>
<dbReference type="AGR" id="RGD:621453"/>
<dbReference type="CTD" id="7162"/>
<dbReference type="RGD" id="621453">
    <property type="gene designation" value="Tpbg"/>
</dbReference>
<dbReference type="eggNOG" id="KOG0619">
    <property type="taxonomic scope" value="Eukaryota"/>
</dbReference>
<dbReference type="GeneTree" id="ENSGT00940000154868"/>
<dbReference type="HOGENOM" id="CLU_064866_0_0_1"/>
<dbReference type="InParanoid" id="Q5PQV5"/>
<dbReference type="OMA" id="FVKPSDM"/>
<dbReference type="OrthoDB" id="70382at9989"/>
<dbReference type="PhylomeDB" id="Q5PQV5"/>
<dbReference type="TreeFam" id="TF351115"/>
<dbReference type="PRO" id="PR:Q5PQV5"/>
<dbReference type="Proteomes" id="UP000002494">
    <property type="component" value="Chromosome 8"/>
</dbReference>
<dbReference type="Bgee" id="ENSRNOG00000010694">
    <property type="expression patterns" value="Expressed in ovary and 19 other cell types or tissues"/>
</dbReference>
<dbReference type="GO" id="GO:0043679">
    <property type="term" value="C:axon terminus"/>
    <property type="evidence" value="ECO:0000266"/>
    <property type="project" value="RGD"/>
</dbReference>
<dbReference type="GO" id="GO:0005737">
    <property type="term" value="C:cytoplasm"/>
    <property type="evidence" value="ECO:0000266"/>
    <property type="project" value="RGD"/>
</dbReference>
<dbReference type="GO" id="GO:0030425">
    <property type="term" value="C:dendrite"/>
    <property type="evidence" value="ECO:0000266"/>
    <property type="project" value="RGD"/>
</dbReference>
<dbReference type="GO" id="GO:0005783">
    <property type="term" value="C:endoplasmic reticulum"/>
    <property type="evidence" value="ECO:0000266"/>
    <property type="project" value="RGD"/>
</dbReference>
<dbReference type="GO" id="GO:0005886">
    <property type="term" value="C:plasma membrane"/>
    <property type="evidence" value="ECO:0000266"/>
    <property type="project" value="RGD"/>
</dbReference>
<dbReference type="GO" id="GO:0060326">
    <property type="term" value="P:cell chemotaxis"/>
    <property type="evidence" value="ECO:0000266"/>
    <property type="project" value="RGD"/>
</dbReference>
<dbReference type="GO" id="GO:0140059">
    <property type="term" value="P:dendrite arborization"/>
    <property type="evidence" value="ECO:0000266"/>
    <property type="project" value="RGD"/>
</dbReference>
<dbReference type="GO" id="GO:0090497">
    <property type="term" value="P:mesenchymal cell migration"/>
    <property type="evidence" value="ECO:0000266"/>
    <property type="project" value="RGD"/>
</dbReference>
<dbReference type="GO" id="GO:0090090">
    <property type="term" value="P:negative regulation of canonical Wnt signaling pathway"/>
    <property type="evidence" value="ECO:0000318"/>
    <property type="project" value="GO_Central"/>
</dbReference>
<dbReference type="GO" id="GO:0008285">
    <property type="term" value="P:negative regulation of cell population proliferation"/>
    <property type="evidence" value="ECO:0000266"/>
    <property type="project" value="RGD"/>
</dbReference>
<dbReference type="GO" id="GO:0008355">
    <property type="term" value="P:olfactory learning"/>
    <property type="evidence" value="ECO:0000266"/>
    <property type="project" value="RGD"/>
</dbReference>
<dbReference type="GO" id="GO:0050921">
    <property type="term" value="P:positive regulation of chemotaxis"/>
    <property type="evidence" value="ECO:0000266"/>
    <property type="project" value="RGD"/>
</dbReference>
<dbReference type="GO" id="GO:0070374">
    <property type="term" value="P:positive regulation of ERK1 and ERK2 cascade"/>
    <property type="evidence" value="ECO:0000266"/>
    <property type="project" value="RGD"/>
</dbReference>
<dbReference type="GO" id="GO:0051897">
    <property type="term" value="P:positive regulation of phosphatidylinositol 3-kinase/protein kinase B signal transduction"/>
    <property type="evidence" value="ECO:0000266"/>
    <property type="project" value="RGD"/>
</dbReference>
<dbReference type="GO" id="GO:0051965">
    <property type="term" value="P:positive regulation of synapse assembly"/>
    <property type="evidence" value="ECO:0000266"/>
    <property type="project" value="RGD"/>
</dbReference>
<dbReference type="GO" id="GO:0072659">
    <property type="term" value="P:protein localization to plasma membrane"/>
    <property type="evidence" value="ECO:0000266"/>
    <property type="project" value="RGD"/>
</dbReference>
<dbReference type="GO" id="GO:0051932">
    <property type="term" value="P:synaptic transmission, GABAergic"/>
    <property type="evidence" value="ECO:0000266"/>
    <property type="project" value="RGD"/>
</dbReference>
<dbReference type="FunFam" id="3.80.10.10:FF:000745">
    <property type="entry name" value="Trophoblast glycoprotein"/>
    <property type="match status" value="1"/>
</dbReference>
<dbReference type="Gene3D" id="3.80.10.10">
    <property type="entry name" value="Ribonuclease Inhibitor"/>
    <property type="match status" value="1"/>
</dbReference>
<dbReference type="InterPro" id="IPR000483">
    <property type="entry name" value="Cys-rich_flank_reg_C"/>
</dbReference>
<dbReference type="InterPro" id="IPR001611">
    <property type="entry name" value="Leu-rich_rpt"/>
</dbReference>
<dbReference type="InterPro" id="IPR003591">
    <property type="entry name" value="Leu-rich_rpt_typical-subtyp"/>
</dbReference>
<dbReference type="InterPro" id="IPR032675">
    <property type="entry name" value="LRR_dom_sf"/>
</dbReference>
<dbReference type="InterPro" id="IPR000372">
    <property type="entry name" value="LRRNT"/>
</dbReference>
<dbReference type="InterPro" id="IPR052286">
    <property type="entry name" value="Wnt_signaling_inhibitor"/>
</dbReference>
<dbReference type="PANTHER" id="PTHR24364">
    <property type="entry name" value="LP06937P"/>
    <property type="match status" value="1"/>
</dbReference>
<dbReference type="PANTHER" id="PTHR24364:SF17">
    <property type="entry name" value="TROPHOBLAST GLYCOPROTEIN"/>
    <property type="match status" value="1"/>
</dbReference>
<dbReference type="Pfam" id="PF13855">
    <property type="entry name" value="LRR_8"/>
    <property type="match status" value="2"/>
</dbReference>
<dbReference type="Pfam" id="PF01463">
    <property type="entry name" value="LRRCT"/>
    <property type="match status" value="1"/>
</dbReference>
<dbReference type="Pfam" id="PF01462">
    <property type="entry name" value="LRRNT"/>
    <property type="match status" value="1"/>
</dbReference>
<dbReference type="PRINTS" id="PR00019">
    <property type="entry name" value="LEURICHRPT"/>
</dbReference>
<dbReference type="SMART" id="SM00369">
    <property type="entry name" value="LRR_TYP"/>
    <property type="match status" value="6"/>
</dbReference>
<dbReference type="SMART" id="SM00082">
    <property type="entry name" value="LRRCT"/>
    <property type="match status" value="1"/>
</dbReference>
<dbReference type="SMART" id="SM00013">
    <property type="entry name" value="LRRNT"/>
    <property type="match status" value="1"/>
</dbReference>
<dbReference type="SUPFAM" id="SSF52058">
    <property type="entry name" value="L domain-like"/>
    <property type="match status" value="1"/>
</dbReference>
<dbReference type="PROSITE" id="PS51450">
    <property type="entry name" value="LRR"/>
    <property type="match status" value="5"/>
</dbReference>
<proteinExistence type="evidence at protein level"/>
<name>TPBG_RAT</name>
<sequence length="426" mass="46508">MPGAGSRGPSAGDGRLRLARLALVLLGWVSASAPSSSLPSSSTSPAAFLASGSAQPPPAERCPAACECSEAARTVKCVNRNLLEVPADLPPYVRNLFLTGNQMTVLPAGAFARQPPLADLAVLNLSGNHLKEVGAGAFEHLPGLRRLDLSHNPLTNLSAFTFAGSNVSVSTPSPLLELILNHIVPPEDQRQNGSFEGMVAFEGMVAAALRSGLALRGLHHLELASNHFLYLPRDLLDQLPSLKHLDLRNNSLVSLTYASFRNLTHLESLHLEDNALKVLHNSTLAEWQGLAHVRVFLDNNPWVCDCYMADMVSWLKETEVVPDKARLTCAFPEKMRNRGLLDLTSSDLDCDATLPQSLQTSYVFLGIVLALIGAIFLLVLYLNRKGIKKWMHNIRDACRDHMEGYHYRYEINADPRLTNLSSNSDV</sequence>
<keyword id="KW-1003">Cell membrane</keyword>
<keyword id="KW-1015">Disulfide bond</keyword>
<keyword id="KW-0325">Glycoprotein</keyword>
<keyword id="KW-0433">Leucine-rich repeat</keyword>
<keyword id="KW-0472">Membrane</keyword>
<keyword id="KW-0597">Phosphoprotein</keyword>
<keyword id="KW-1185">Reference proteome</keyword>
<keyword id="KW-0677">Repeat</keyword>
<keyword id="KW-0732">Signal</keyword>
<keyword id="KW-0812">Transmembrane</keyword>
<keyword id="KW-1133">Transmembrane helix</keyword>